<proteinExistence type="evidence at protein level"/>
<accession>P30690</accession>
<protein>
    <recommendedName>
        <fullName>Major outer membrane protein P.IB</fullName>
        <shortName>PIB</shortName>
        <shortName>Protein IB</shortName>
    </recommendedName>
    <alternativeName>
        <fullName>Class 3 protein</fullName>
    </alternativeName>
    <alternativeName>
        <fullName>Porin</fullName>
    </alternativeName>
</protein>
<dbReference type="EMBL" id="X65532">
    <property type="protein sequence ID" value="CAA46502.1"/>
    <property type="molecule type" value="Genomic_DNA"/>
</dbReference>
<dbReference type="EMBL" id="AE002098">
    <property type="protein sequence ID" value="AAF42360.1"/>
    <property type="molecule type" value="Genomic_DNA"/>
</dbReference>
<dbReference type="PIR" id="S21407">
    <property type="entry name" value="S21407"/>
</dbReference>
<dbReference type="RefSeq" id="NP_275030.1">
    <property type="nucleotide sequence ID" value="NC_003112.2"/>
</dbReference>
<dbReference type="RefSeq" id="WP_002244345.1">
    <property type="nucleotide sequence ID" value="NC_003112.2"/>
</dbReference>
<dbReference type="PDB" id="3WI4">
    <property type="method" value="X-ray"/>
    <property type="resolution" value="3.32 A"/>
    <property type="chains" value="A=20-331"/>
</dbReference>
<dbReference type="PDB" id="3WI5">
    <property type="method" value="X-ray"/>
    <property type="resolution" value="2.40 A"/>
    <property type="chains" value="A=20-331"/>
</dbReference>
<dbReference type="PDBsum" id="3WI4"/>
<dbReference type="PDBsum" id="3WI5"/>
<dbReference type="SMR" id="P30690"/>
<dbReference type="STRING" id="122586.NMB2039"/>
<dbReference type="PaxDb" id="122586-NMB2039"/>
<dbReference type="KEGG" id="nme:NMB2039"/>
<dbReference type="PATRIC" id="fig|122586.8.peg.2608"/>
<dbReference type="HOGENOM" id="CLU_038238_4_0_4"/>
<dbReference type="InParanoid" id="P30690"/>
<dbReference type="OrthoDB" id="5289162at2"/>
<dbReference type="Reactome" id="R-HSA-1236974">
    <property type="pathway name" value="ER-Phagosome pathway"/>
</dbReference>
<dbReference type="Reactome" id="R-HSA-166058">
    <property type="pathway name" value="MyD88:MAL(TIRAP) cascade initiated on plasma membrane"/>
</dbReference>
<dbReference type="Reactome" id="R-HSA-168179">
    <property type="pathway name" value="Toll Like Receptor TLR1:TLR2 Cascade"/>
</dbReference>
<dbReference type="Reactome" id="R-HSA-5602498">
    <property type="pathway name" value="MyD88 deficiency (TLR2/4)"/>
</dbReference>
<dbReference type="Reactome" id="R-HSA-5603041">
    <property type="pathway name" value="IRAK4 deficiency (TLR2/4)"/>
</dbReference>
<dbReference type="EvolutionaryTrace" id="P30690"/>
<dbReference type="Proteomes" id="UP000000425">
    <property type="component" value="Chromosome"/>
</dbReference>
<dbReference type="GO" id="GO:0009279">
    <property type="term" value="C:cell outer membrane"/>
    <property type="evidence" value="ECO:0007669"/>
    <property type="project" value="UniProtKB-SubCell"/>
</dbReference>
<dbReference type="GO" id="GO:0046930">
    <property type="term" value="C:pore complex"/>
    <property type="evidence" value="ECO:0007669"/>
    <property type="project" value="UniProtKB-KW"/>
</dbReference>
<dbReference type="GO" id="GO:0015288">
    <property type="term" value="F:porin activity"/>
    <property type="evidence" value="ECO:0007669"/>
    <property type="project" value="UniProtKB-KW"/>
</dbReference>
<dbReference type="GO" id="GO:0034220">
    <property type="term" value="P:monoatomic ion transmembrane transport"/>
    <property type="evidence" value="ECO:0007669"/>
    <property type="project" value="InterPro"/>
</dbReference>
<dbReference type="CDD" id="cd00342">
    <property type="entry name" value="gram_neg_porins"/>
    <property type="match status" value="1"/>
</dbReference>
<dbReference type="Gene3D" id="2.40.160.10">
    <property type="entry name" value="Porin"/>
    <property type="match status" value="1"/>
</dbReference>
<dbReference type="InterPro" id="IPR050298">
    <property type="entry name" value="Gram-neg_bact_OMP"/>
</dbReference>
<dbReference type="InterPro" id="IPR033900">
    <property type="entry name" value="Gram_neg_porin_domain"/>
</dbReference>
<dbReference type="InterPro" id="IPR023614">
    <property type="entry name" value="Porin_dom_sf"/>
</dbReference>
<dbReference type="InterPro" id="IPR001702">
    <property type="entry name" value="Porin_Gram-ve"/>
</dbReference>
<dbReference type="InterPro" id="IPR013793">
    <property type="entry name" value="Porin_Gram-ve_CS"/>
</dbReference>
<dbReference type="InterPro" id="IPR002299">
    <property type="entry name" value="Porin_Neis"/>
</dbReference>
<dbReference type="NCBIfam" id="NF040479">
    <property type="entry name" value="porin_porB_Neis"/>
    <property type="match status" value="1"/>
</dbReference>
<dbReference type="PANTHER" id="PTHR34501:SF9">
    <property type="entry name" value="MAJOR OUTER MEMBRANE PROTEIN P.IA"/>
    <property type="match status" value="1"/>
</dbReference>
<dbReference type="PANTHER" id="PTHR34501">
    <property type="entry name" value="PROTEIN YDDL-RELATED"/>
    <property type="match status" value="1"/>
</dbReference>
<dbReference type="Pfam" id="PF00267">
    <property type="entry name" value="Porin_1"/>
    <property type="match status" value="1"/>
</dbReference>
<dbReference type="PRINTS" id="PR00182">
    <property type="entry name" value="ECOLNEIPORIN"/>
</dbReference>
<dbReference type="PRINTS" id="PR00184">
    <property type="entry name" value="NEISSPPORIN"/>
</dbReference>
<dbReference type="SUPFAM" id="SSF56935">
    <property type="entry name" value="Porins"/>
    <property type="match status" value="1"/>
</dbReference>
<dbReference type="PROSITE" id="PS00576">
    <property type="entry name" value="GRAM_NEG_PORIN"/>
    <property type="match status" value="1"/>
</dbReference>
<organism>
    <name type="scientific">Neisseria meningitidis serogroup B (strain ATCC BAA-335 / MC58)</name>
    <dbReference type="NCBI Taxonomy" id="122586"/>
    <lineage>
        <taxon>Bacteria</taxon>
        <taxon>Pseudomonadati</taxon>
        <taxon>Pseudomonadota</taxon>
        <taxon>Betaproteobacteria</taxon>
        <taxon>Neisseriales</taxon>
        <taxon>Neisseriaceae</taxon>
        <taxon>Neisseria</taxon>
    </lineage>
</organism>
<comment type="function">
    <text>Serves as a slightly cation selective porin.</text>
</comment>
<comment type="subunit">
    <text>Homotrimer.</text>
</comment>
<comment type="subcellular location">
    <subcellularLocation>
        <location>Cell outer membrane</location>
        <topology>Multi-pass membrane protein</topology>
    </subcellularLocation>
</comment>
<comment type="miscellaneous">
    <text>Present in outer membrane vesicle formulations which are used as vaccines in human.</text>
</comment>
<comment type="similarity">
    <text evidence="2">Belongs to the Gram-negative porin family.</text>
</comment>
<reference key="1">
    <citation type="journal article" date="1992" name="FEMS Microbiol. Lett.">
        <title>Sequence analysis and relationships between meningococcal class 3 serotype proteins and other porins from pathogenic and non-pathogenic Neisseria species.</title>
        <authorList>
            <person name="Ward M.J."/>
            <person name="Lambden P.R."/>
            <person name="Heckels J.E."/>
        </authorList>
    </citation>
    <scope>NUCLEOTIDE SEQUENCE [GENOMIC DNA]</scope>
    <source>
        <strain>ATCC BAA-335 / MC58</strain>
    </source>
</reference>
<reference key="2">
    <citation type="journal article" date="2000" name="Science">
        <title>Complete genome sequence of Neisseria meningitidis serogroup B strain MC58.</title>
        <authorList>
            <person name="Tettelin H."/>
            <person name="Saunders N.J."/>
            <person name="Heidelberg J.F."/>
            <person name="Jeffries A.C."/>
            <person name="Nelson K.E."/>
            <person name="Eisen J.A."/>
            <person name="Ketchum K.A."/>
            <person name="Hood D.W."/>
            <person name="Peden J.F."/>
            <person name="Dodson R.J."/>
            <person name="Nelson W.C."/>
            <person name="Gwinn M.L."/>
            <person name="DeBoy R.T."/>
            <person name="Peterson J.D."/>
            <person name="Hickey E.K."/>
            <person name="Haft D.H."/>
            <person name="Salzberg S.L."/>
            <person name="White O."/>
            <person name="Fleischmann R.D."/>
            <person name="Dougherty B.A."/>
            <person name="Mason T.M."/>
            <person name="Ciecko A."/>
            <person name="Parksey D.S."/>
            <person name="Blair E."/>
            <person name="Cittone H."/>
            <person name="Clark E.B."/>
            <person name="Cotton M.D."/>
            <person name="Utterback T.R."/>
            <person name="Khouri H.M."/>
            <person name="Qin H."/>
            <person name="Vamathevan J.J."/>
            <person name="Gill J."/>
            <person name="Scarlato V."/>
            <person name="Masignani V."/>
            <person name="Pizza M."/>
            <person name="Grandi G."/>
            <person name="Sun L."/>
            <person name="Smith H.O."/>
            <person name="Fraser C.M."/>
            <person name="Moxon E.R."/>
            <person name="Rappuoli R."/>
            <person name="Venter J.C."/>
        </authorList>
    </citation>
    <scope>NUCLEOTIDE SEQUENCE [LARGE SCALE GENOMIC DNA]</scope>
    <source>
        <strain>ATCC BAA-335 / MC58</strain>
    </source>
</reference>
<reference key="3">
    <citation type="journal article" date="2005" name="Hum. Vaccin.">
        <title>Characterization of the protein content of a meningococcal outer membrane vesicle vaccine by polyacrylamide gel electrophoresis and mass spectrometry.</title>
        <authorList>
            <person name="Vipond C."/>
            <person name="Wheeler J.X."/>
            <person name="Jones C."/>
            <person name="Feavers I.M."/>
            <person name="Suker J."/>
        </authorList>
    </citation>
    <scope>IDENTIFICATION BY MASS SPECTROMETRY [LARGE SCALE ANALYSIS]</scope>
</reference>
<reference key="4">
    <citation type="journal article" date="2006" name="Proteomics">
        <title>Proteomic analysis of a meningococcal outer membrane vesicle vaccine prepared from the group B strain NZ98/254.</title>
        <authorList>
            <person name="Vipond C."/>
            <person name="Suker J."/>
            <person name="Jones C."/>
            <person name="Tang C."/>
            <person name="Feavers I.M."/>
            <person name="Wheeler J.X."/>
        </authorList>
    </citation>
    <scope>IDENTIFICATION BY MASS SPECTROMETRY [LARGE SCALE ANALYSIS]</scope>
    <source>
        <strain>NZ98/254 / Serogroup B</strain>
    </source>
</reference>
<sequence length="331" mass="35682">MKKSLIALTLAALPVAAMADVTLYGTIKAGVETSRSVFHQNGQVTEVTTATGIVDLGSKIGFKGQEDLGNGLKAIWQVEQKASIAGTDSGWGNRQSFIGLKGGFGKLRVGRLNSVLKDTGDINPWDSKSDYLGVNKIAEPEARLISVRYDSPEFAGLSGSVQYALNDNAGRHNSESYHAGFNYKNGGFFVQYGGAYKRHHQVQEGLNIEKYQIHRLVSGYDNDALYASVAVQQQDAKLTDASNSHNSQTEVAATLAYRFGNVTPRVSYAHGFKGLVDDADIGNEYDQVVVGAEYDFSKRTSALVSAGWLQEGKGENKFVATAGGVGLRHKF</sequence>
<keyword id="KW-0002">3D-structure</keyword>
<keyword id="KW-0998">Cell outer membrane</keyword>
<keyword id="KW-0406">Ion transport</keyword>
<keyword id="KW-0472">Membrane</keyword>
<keyword id="KW-0626">Porin</keyword>
<keyword id="KW-1185">Reference proteome</keyword>
<keyword id="KW-0732">Signal</keyword>
<keyword id="KW-0812">Transmembrane</keyword>
<keyword id="KW-1134">Transmembrane beta strand</keyword>
<keyword id="KW-0813">Transport</keyword>
<feature type="signal peptide" evidence="1">
    <location>
        <begin position="1"/>
        <end position="19"/>
    </location>
</feature>
<feature type="chain" id="PRO_0000025281" description="Major outer membrane protein P.IB">
    <location>
        <begin position="20"/>
        <end position="331"/>
    </location>
</feature>
<feature type="strand" evidence="4">
    <location>
        <begin position="21"/>
        <end position="39"/>
    </location>
</feature>
<feature type="strand" evidence="4">
    <location>
        <begin position="41"/>
        <end position="55"/>
    </location>
</feature>
<feature type="strand" evidence="4">
    <location>
        <begin position="59"/>
        <end position="69"/>
    </location>
</feature>
<feature type="strand" evidence="4">
    <location>
        <begin position="72"/>
        <end position="81"/>
    </location>
</feature>
<feature type="strand" evidence="4">
    <location>
        <begin position="94"/>
        <end position="102"/>
    </location>
</feature>
<feature type="strand" evidence="4">
    <location>
        <begin position="105"/>
        <end position="113"/>
    </location>
</feature>
<feature type="helix" evidence="4">
    <location>
        <begin position="116"/>
        <end position="118"/>
    </location>
</feature>
<feature type="turn" evidence="4">
    <location>
        <begin position="130"/>
        <end position="134"/>
    </location>
</feature>
<feature type="turn" evidence="4">
    <location>
        <begin position="136"/>
        <end position="140"/>
    </location>
</feature>
<feature type="strand" evidence="4">
    <location>
        <begin position="143"/>
        <end position="150"/>
    </location>
</feature>
<feature type="strand" evidence="4">
    <location>
        <begin position="157"/>
        <end position="164"/>
    </location>
</feature>
<feature type="helix" evidence="4">
    <location>
        <begin position="166"/>
        <end position="169"/>
    </location>
</feature>
<feature type="strand" evidence="4">
    <location>
        <begin position="176"/>
        <end position="185"/>
    </location>
</feature>
<feature type="strand" evidence="4">
    <location>
        <begin position="188"/>
        <end position="200"/>
    </location>
</feature>
<feature type="strand" evidence="4">
    <location>
        <begin position="203"/>
        <end position="205"/>
    </location>
</feature>
<feature type="strand" evidence="4">
    <location>
        <begin position="208"/>
        <end position="222"/>
    </location>
</feature>
<feature type="strand" evidence="4">
    <location>
        <begin position="225"/>
        <end position="240"/>
    </location>
</feature>
<feature type="strand" evidence="4">
    <location>
        <begin position="245"/>
        <end position="256"/>
    </location>
</feature>
<feature type="strand" evidence="4">
    <location>
        <begin position="262"/>
        <end position="271"/>
    </location>
</feature>
<feature type="strand" evidence="3">
    <location>
        <begin position="277"/>
        <end position="279"/>
    </location>
</feature>
<feature type="strand" evidence="4">
    <location>
        <begin position="285"/>
        <end position="310"/>
    </location>
</feature>
<feature type="strand" evidence="4">
    <location>
        <begin position="314"/>
        <end position="316"/>
    </location>
</feature>
<feature type="strand" evidence="4">
    <location>
        <begin position="318"/>
        <end position="331"/>
    </location>
</feature>
<evidence type="ECO:0000250" key="1"/>
<evidence type="ECO:0000305" key="2"/>
<evidence type="ECO:0007829" key="3">
    <source>
        <dbReference type="PDB" id="3WI4"/>
    </source>
</evidence>
<evidence type="ECO:0007829" key="4">
    <source>
        <dbReference type="PDB" id="3WI5"/>
    </source>
</evidence>
<name>OMPB1_NEIMB</name>
<gene>
    <name type="primary">porB</name>
    <name type="ordered locus">NMB2039</name>
</gene>